<accession>Q8D2X6</accession>
<dbReference type="EMBL" id="BA000021">
    <property type="protein sequence ID" value="BAC24372.1"/>
    <property type="molecule type" value="Genomic_DNA"/>
</dbReference>
<dbReference type="SMR" id="Q8D2X6"/>
<dbReference type="STRING" id="36870.gene:10368714"/>
<dbReference type="KEGG" id="wbr:infB"/>
<dbReference type="eggNOG" id="COG0532">
    <property type="taxonomic scope" value="Bacteria"/>
</dbReference>
<dbReference type="HOGENOM" id="CLU_006301_6_3_6"/>
<dbReference type="OrthoDB" id="9811804at2"/>
<dbReference type="Proteomes" id="UP000000562">
    <property type="component" value="Chromosome"/>
</dbReference>
<dbReference type="GO" id="GO:0005829">
    <property type="term" value="C:cytosol"/>
    <property type="evidence" value="ECO:0007669"/>
    <property type="project" value="TreeGrafter"/>
</dbReference>
<dbReference type="GO" id="GO:0005525">
    <property type="term" value="F:GTP binding"/>
    <property type="evidence" value="ECO:0007669"/>
    <property type="project" value="UniProtKB-KW"/>
</dbReference>
<dbReference type="GO" id="GO:0003924">
    <property type="term" value="F:GTPase activity"/>
    <property type="evidence" value="ECO:0007669"/>
    <property type="project" value="UniProtKB-UniRule"/>
</dbReference>
<dbReference type="GO" id="GO:0003743">
    <property type="term" value="F:translation initiation factor activity"/>
    <property type="evidence" value="ECO:0007669"/>
    <property type="project" value="UniProtKB-UniRule"/>
</dbReference>
<dbReference type="CDD" id="cd01887">
    <property type="entry name" value="IF2_eIF5B"/>
    <property type="match status" value="1"/>
</dbReference>
<dbReference type="CDD" id="cd03702">
    <property type="entry name" value="IF2_mtIF2_II"/>
    <property type="match status" value="1"/>
</dbReference>
<dbReference type="CDD" id="cd03692">
    <property type="entry name" value="mtIF2_IVc"/>
    <property type="match status" value="1"/>
</dbReference>
<dbReference type="FunFam" id="2.40.30.10:FF:000007">
    <property type="entry name" value="Translation initiation factor IF-2"/>
    <property type="match status" value="1"/>
</dbReference>
<dbReference type="FunFam" id="2.40.30.10:FF:000008">
    <property type="entry name" value="Translation initiation factor IF-2"/>
    <property type="match status" value="1"/>
</dbReference>
<dbReference type="FunFam" id="3.40.50.10050:FF:000001">
    <property type="entry name" value="Translation initiation factor IF-2"/>
    <property type="match status" value="1"/>
</dbReference>
<dbReference type="FunFam" id="3.40.50.300:FF:000019">
    <property type="entry name" value="Translation initiation factor IF-2"/>
    <property type="match status" value="1"/>
</dbReference>
<dbReference type="Gene3D" id="3.40.50.300">
    <property type="entry name" value="P-loop containing nucleotide triphosphate hydrolases"/>
    <property type="match status" value="1"/>
</dbReference>
<dbReference type="Gene3D" id="3.30.56.50">
    <property type="entry name" value="Putative DNA-binding domain, N-terminal subdomain of bacterial translation initiation factor IF2"/>
    <property type="match status" value="1"/>
</dbReference>
<dbReference type="Gene3D" id="2.40.30.10">
    <property type="entry name" value="Translation factors"/>
    <property type="match status" value="2"/>
</dbReference>
<dbReference type="Gene3D" id="3.40.50.10050">
    <property type="entry name" value="Translation initiation factor IF- 2, domain 3"/>
    <property type="match status" value="1"/>
</dbReference>
<dbReference type="HAMAP" id="MF_00100_B">
    <property type="entry name" value="IF_2_B"/>
    <property type="match status" value="1"/>
</dbReference>
<dbReference type="InterPro" id="IPR009061">
    <property type="entry name" value="DNA-bd_dom_put_sf"/>
</dbReference>
<dbReference type="InterPro" id="IPR053905">
    <property type="entry name" value="EF-G-like_DII"/>
</dbReference>
<dbReference type="InterPro" id="IPR013575">
    <property type="entry name" value="IF2_assoc_dom_bac"/>
</dbReference>
<dbReference type="InterPro" id="IPR044145">
    <property type="entry name" value="IF2_II"/>
</dbReference>
<dbReference type="InterPro" id="IPR006847">
    <property type="entry name" value="IF2_N"/>
</dbReference>
<dbReference type="InterPro" id="IPR027417">
    <property type="entry name" value="P-loop_NTPase"/>
</dbReference>
<dbReference type="InterPro" id="IPR005225">
    <property type="entry name" value="Small_GTP-bd"/>
</dbReference>
<dbReference type="InterPro" id="IPR000795">
    <property type="entry name" value="T_Tr_GTP-bd_dom"/>
</dbReference>
<dbReference type="InterPro" id="IPR000178">
    <property type="entry name" value="TF_IF2_bacterial-like"/>
</dbReference>
<dbReference type="InterPro" id="IPR015760">
    <property type="entry name" value="TIF_IF2"/>
</dbReference>
<dbReference type="InterPro" id="IPR023115">
    <property type="entry name" value="TIF_IF2_dom3"/>
</dbReference>
<dbReference type="InterPro" id="IPR036925">
    <property type="entry name" value="TIF_IF2_dom3_sf"/>
</dbReference>
<dbReference type="InterPro" id="IPR009000">
    <property type="entry name" value="Transl_B-barrel_sf"/>
</dbReference>
<dbReference type="NCBIfam" id="TIGR00487">
    <property type="entry name" value="IF-2"/>
    <property type="match status" value="1"/>
</dbReference>
<dbReference type="NCBIfam" id="TIGR00231">
    <property type="entry name" value="small_GTP"/>
    <property type="match status" value="1"/>
</dbReference>
<dbReference type="PANTHER" id="PTHR43381:SF5">
    <property type="entry name" value="TR-TYPE G DOMAIN-CONTAINING PROTEIN"/>
    <property type="match status" value="1"/>
</dbReference>
<dbReference type="PANTHER" id="PTHR43381">
    <property type="entry name" value="TRANSLATION INITIATION FACTOR IF-2-RELATED"/>
    <property type="match status" value="1"/>
</dbReference>
<dbReference type="Pfam" id="PF22042">
    <property type="entry name" value="EF-G_D2"/>
    <property type="match status" value="1"/>
</dbReference>
<dbReference type="Pfam" id="PF00009">
    <property type="entry name" value="GTP_EFTU"/>
    <property type="match status" value="1"/>
</dbReference>
<dbReference type="Pfam" id="PF11987">
    <property type="entry name" value="IF-2"/>
    <property type="match status" value="1"/>
</dbReference>
<dbReference type="Pfam" id="PF08364">
    <property type="entry name" value="IF2_assoc"/>
    <property type="match status" value="1"/>
</dbReference>
<dbReference type="Pfam" id="PF04760">
    <property type="entry name" value="IF2_N"/>
    <property type="match status" value="2"/>
</dbReference>
<dbReference type="SUPFAM" id="SSF52156">
    <property type="entry name" value="Initiation factor IF2/eIF5b, domain 3"/>
    <property type="match status" value="1"/>
</dbReference>
<dbReference type="SUPFAM" id="SSF52540">
    <property type="entry name" value="P-loop containing nucleoside triphosphate hydrolases"/>
    <property type="match status" value="1"/>
</dbReference>
<dbReference type="SUPFAM" id="SSF46955">
    <property type="entry name" value="Putative DNA-binding domain"/>
    <property type="match status" value="1"/>
</dbReference>
<dbReference type="SUPFAM" id="SSF50447">
    <property type="entry name" value="Translation proteins"/>
    <property type="match status" value="2"/>
</dbReference>
<dbReference type="PROSITE" id="PS51722">
    <property type="entry name" value="G_TR_2"/>
    <property type="match status" value="1"/>
</dbReference>
<dbReference type="PROSITE" id="PS01176">
    <property type="entry name" value="IF2"/>
    <property type="match status" value="1"/>
</dbReference>
<proteinExistence type="inferred from homology"/>
<gene>
    <name evidence="2" type="primary">infB</name>
    <name type="ordered locus">WIGBR2260</name>
</gene>
<protein>
    <recommendedName>
        <fullName evidence="2">Translation initiation factor IF-2</fullName>
    </recommendedName>
</protein>
<comment type="function">
    <text evidence="2">One of the essential components for the initiation of protein synthesis. Protects formylmethionyl-tRNA from spontaneous hydrolysis and promotes its binding to the 30S ribosomal subunits. Also involved in the hydrolysis of GTP during the formation of the 70S ribosomal complex.</text>
</comment>
<comment type="subcellular location">
    <subcellularLocation>
        <location evidence="2">Cytoplasm</location>
    </subcellularLocation>
</comment>
<comment type="similarity">
    <text evidence="2">Belongs to the TRAFAC class translation factor GTPase superfamily. Classic translation factor GTPase family. IF-2 subfamily.</text>
</comment>
<keyword id="KW-0963">Cytoplasm</keyword>
<keyword id="KW-0342">GTP-binding</keyword>
<keyword id="KW-0396">Initiation factor</keyword>
<keyword id="KW-0547">Nucleotide-binding</keyword>
<keyword id="KW-0648">Protein biosynthesis</keyword>
<keyword id="KW-1185">Reference proteome</keyword>
<evidence type="ECO:0000250" key="1"/>
<evidence type="ECO:0000255" key="2">
    <source>
        <dbReference type="HAMAP-Rule" id="MF_00100"/>
    </source>
</evidence>
<organism>
    <name type="scientific">Wigglesworthia glossinidia brevipalpis</name>
    <dbReference type="NCBI Taxonomy" id="36870"/>
    <lineage>
        <taxon>Bacteria</taxon>
        <taxon>Pseudomonadati</taxon>
        <taxon>Pseudomonadota</taxon>
        <taxon>Gammaproteobacteria</taxon>
        <taxon>Enterobacterales</taxon>
        <taxon>Erwiniaceae</taxon>
        <taxon>Wigglesworthia</taxon>
    </lineage>
</organism>
<reference key="1">
    <citation type="journal article" date="2002" name="Nat. Genet.">
        <title>Genome sequence of the endocellular obligate symbiont of tsetse flies, Wigglesworthia glossinidia.</title>
        <authorList>
            <person name="Akman L."/>
            <person name="Yamashita A."/>
            <person name="Watanabe H."/>
            <person name="Oshima K."/>
            <person name="Shiba T."/>
            <person name="Hattori M."/>
            <person name="Aksoy S."/>
        </authorList>
    </citation>
    <scope>NUCLEOTIDE SEQUENCE [LARGE SCALE GENOMIC DNA]</scope>
</reference>
<feature type="chain" id="PRO_0000137283" description="Translation initiation factor IF-2">
    <location>
        <begin position="1"/>
        <end position="841"/>
    </location>
</feature>
<feature type="domain" description="tr-type G">
    <location>
        <begin position="341"/>
        <end position="508"/>
    </location>
</feature>
<feature type="region of interest" description="G1" evidence="1">
    <location>
        <begin position="350"/>
        <end position="357"/>
    </location>
</feature>
<feature type="region of interest" description="G2" evidence="1">
    <location>
        <begin position="375"/>
        <end position="379"/>
    </location>
</feature>
<feature type="region of interest" description="G3" evidence="1">
    <location>
        <begin position="396"/>
        <end position="399"/>
    </location>
</feature>
<feature type="region of interest" description="G4" evidence="1">
    <location>
        <begin position="450"/>
        <end position="453"/>
    </location>
</feature>
<feature type="region of interest" description="G5" evidence="1">
    <location>
        <begin position="486"/>
        <end position="488"/>
    </location>
</feature>
<feature type="binding site" evidence="2">
    <location>
        <begin position="350"/>
        <end position="357"/>
    </location>
    <ligand>
        <name>GTP</name>
        <dbReference type="ChEBI" id="CHEBI:37565"/>
    </ligand>
</feature>
<feature type="binding site" evidence="2">
    <location>
        <begin position="396"/>
        <end position="400"/>
    </location>
    <ligand>
        <name>GTP</name>
        <dbReference type="ChEBI" id="CHEBI:37565"/>
    </ligand>
</feature>
<feature type="binding site" evidence="2">
    <location>
        <begin position="450"/>
        <end position="453"/>
    </location>
    <ligand>
        <name>GTP</name>
        <dbReference type="ChEBI" id="CHEBI:37565"/>
    </ligand>
</feature>
<name>IF2_WIGBR</name>
<sequence length="841" mass="94759">MKNVTIKSFSEEIKIPINKLIQKFADAGITKTNIDYVSLEEKKILLSYINSHHVNLPKNLSLQKKTKSKLNISSLNGKNKIVKIEVRKKKYLKCDSSLLFKDKIVKNNIDKTFCKKNIKDLNKTKKYVELSKNINEREINFEKKLIKEPILDKSKLKISKNLIKKNVKINKNLNIYKKNEFKQNLKKNKLNKKEKNKKIEINYKVKNKNENIFKKIKSNRLFGSETNFFNNNIDKKTNIRKKISSLTHTFNKPLKKIIKEITIGETISVFELSNKMAVKSHKVVSNMMKLGIKSSINEVIDQDIAQIIAEEMGHKVKLIKNNALEEEIIKNQNKNLYELKNRAPVVTIMGHVDHGKTSLLDYIRTTKVALKEKGGITQCIGAYYVKTKKGIITFIDTPGHAAFTEMRIRGSKITDIIVIVIAADDSIMPQTVEAINHAKIAKVPVIIAINKIDKITSNPEKVKKELIKHGIFLEEYGGDTQCLLISAKSGLGIDFLLDAILLQAEILELKAMHKGMASGTVIESRLEKGKGPVSTILIQEGRLHQGDVVLCGCEYGKIKAMQDSFKCKIKSVGPSIPVEILGLSGIPISGDKITVVKEEKKAREVAIYRQNKLRESKLRINKKIKIENVFSNLNLSTKKNINIVLKSDAHGSSQAISNALILLSNEEIKINIIYSGVGPITETDVALATSSNAIIIGFNVKPDFSNIKNTESIGLNIKCCSIIYEIVDFVKQKIYLSCNTKYNKKIIGILIVKNIFQLPKLGSIAGCIVKEGIVKKNSIAKILRNKSFVHESKIISLRRFKEDVNEVKSGTECGIVIKNFNDIKPLDIIEILELEELNKKI</sequence>